<reference key="1">
    <citation type="submission" date="2008-01" db="EMBL/GenBank/DDBJ databases">
        <title>Complete sequence of Pseudomonas putida GB-1.</title>
        <authorList>
            <consortium name="US DOE Joint Genome Institute"/>
            <person name="Copeland A."/>
            <person name="Lucas S."/>
            <person name="Lapidus A."/>
            <person name="Barry K."/>
            <person name="Glavina del Rio T."/>
            <person name="Dalin E."/>
            <person name="Tice H."/>
            <person name="Pitluck S."/>
            <person name="Bruce D."/>
            <person name="Goodwin L."/>
            <person name="Chertkov O."/>
            <person name="Brettin T."/>
            <person name="Detter J.C."/>
            <person name="Han C."/>
            <person name="Kuske C.R."/>
            <person name="Schmutz J."/>
            <person name="Larimer F."/>
            <person name="Land M."/>
            <person name="Hauser L."/>
            <person name="Kyrpides N."/>
            <person name="Kim E."/>
            <person name="McCarthy J.K."/>
            <person name="Richardson P."/>
        </authorList>
    </citation>
    <scope>NUCLEOTIDE SEQUENCE [LARGE SCALE GENOMIC DNA]</scope>
    <source>
        <strain>GB-1</strain>
    </source>
</reference>
<evidence type="ECO:0000255" key="1">
    <source>
        <dbReference type="HAMAP-Rule" id="MF_00178"/>
    </source>
</evidence>
<organism>
    <name type="scientific">Pseudomonas putida (strain GB-1)</name>
    <dbReference type="NCBI Taxonomy" id="76869"/>
    <lineage>
        <taxon>Bacteria</taxon>
        <taxon>Pseudomonadati</taxon>
        <taxon>Pseudomonadota</taxon>
        <taxon>Gammaproteobacteria</taxon>
        <taxon>Pseudomonadales</taxon>
        <taxon>Pseudomonadaceae</taxon>
        <taxon>Pseudomonas</taxon>
    </lineage>
</organism>
<accession>B0KL70</accession>
<protein>
    <recommendedName>
        <fullName evidence="1">6,7-dimethyl-8-ribityllumazine synthase</fullName>
        <shortName evidence="1">DMRL synthase</shortName>
        <shortName evidence="1">LS</shortName>
        <shortName evidence="1">Lumazine synthase</shortName>
        <ecNumber evidence="1">2.5.1.78</ecNumber>
    </recommendedName>
</protein>
<sequence length="158" mass="16420">MTLKTIEGTFIAPKGRYALVVGRFNSFVVESLVSGAVDALVRHGVSESDITIIRAPGAFEIPLVAQKVAQQGAYDAIIALGAVIRGGTPHFEYVAGECTKGLAQVSMEFGVPVAFGVLTVDSIEQAIERSGTKAGNKGAEAALSALEMVSLLAQLEAK</sequence>
<dbReference type="EC" id="2.5.1.78" evidence="1"/>
<dbReference type="EMBL" id="CP000926">
    <property type="protein sequence ID" value="ABY96474.1"/>
    <property type="molecule type" value="Genomic_DNA"/>
</dbReference>
<dbReference type="SMR" id="B0KL70"/>
<dbReference type="KEGG" id="ppg:PputGB1_0563"/>
<dbReference type="eggNOG" id="COG0054">
    <property type="taxonomic scope" value="Bacteria"/>
</dbReference>
<dbReference type="HOGENOM" id="CLU_089358_1_1_6"/>
<dbReference type="UniPathway" id="UPA00275">
    <property type="reaction ID" value="UER00404"/>
</dbReference>
<dbReference type="Proteomes" id="UP000002157">
    <property type="component" value="Chromosome"/>
</dbReference>
<dbReference type="GO" id="GO:0005829">
    <property type="term" value="C:cytosol"/>
    <property type="evidence" value="ECO:0007669"/>
    <property type="project" value="TreeGrafter"/>
</dbReference>
<dbReference type="GO" id="GO:0009349">
    <property type="term" value="C:riboflavin synthase complex"/>
    <property type="evidence" value="ECO:0007669"/>
    <property type="project" value="InterPro"/>
</dbReference>
<dbReference type="GO" id="GO:0000906">
    <property type="term" value="F:6,7-dimethyl-8-ribityllumazine synthase activity"/>
    <property type="evidence" value="ECO:0007669"/>
    <property type="project" value="UniProtKB-UniRule"/>
</dbReference>
<dbReference type="GO" id="GO:0009231">
    <property type="term" value="P:riboflavin biosynthetic process"/>
    <property type="evidence" value="ECO:0007669"/>
    <property type="project" value="UniProtKB-UniRule"/>
</dbReference>
<dbReference type="CDD" id="cd09209">
    <property type="entry name" value="Lumazine_synthase-I"/>
    <property type="match status" value="1"/>
</dbReference>
<dbReference type="FunFam" id="3.40.50.960:FF:000001">
    <property type="entry name" value="6,7-dimethyl-8-ribityllumazine synthase"/>
    <property type="match status" value="1"/>
</dbReference>
<dbReference type="Gene3D" id="3.40.50.960">
    <property type="entry name" value="Lumazine/riboflavin synthase"/>
    <property type="match status" value="1"/>
</dbReference>
<dbReference type="HAMAP" id="MF_00178">
    <property type="entry name" value="Lumazine_synth"/>
    <property type="match status" value="1"/>
</dbReference>
<dbReference type="InterPro" id="IPR034964">
    <property type="entry name" value="LS"/>
</dbReference>
<dbReference type="InterPro" id="IPR002180">
    <property type="entry name" value="LS/RS"/>
</dbReference>
<dbReference type="InterPro" id="IPR036467">
    <property type="entry name" value="LS/RS_sf"/>
</dbReference>
<dbReference type="NCBIfam" id="TIGR00114">
    <property type="entry name" value="lumazine-synth"/>
    <property type="match status" value="1"/>
</dbReference>
<dbReference type="NCBIfam" id="NF000812">
    <property type="entry name" value="PRK00061.1-4"/>
    <property type="match status" value="1"/>
</dbReference>
<dbReference type="PANTHER" id="PTHR21058:SF0">
    <property type="entry name" value="6,7-DIMETHYL-8-RIBITYLLUMAZINE SYNTHASE"/>
    <property type="match status" value="1"/>
</dbReference>
<dbReference type="PANTHER" id="PTHR21058">
    <property type="entry name" value="6,7-DIMETHYL-8-RIBITYLLUMAZINE SYNTHASE DMRL SYNTHASE LUMAZINE SYNTHASE"/>
    <property type="match status" value="1"/>
</dbReference>
<dbReference type="Pfam" id="PF00885">
    <property type="entry name" value="DMRL_synthase"/>
    <property type="match status" value="1"/>
</dbReference>
<dbReference type="SUPFAM" id="SSF52121">
    <property type="entry name" value="Lumazine synthase"/>
    <property type="match status" value="1"/>
</dbReference>
<feature type="chain" id="PRO_1000077244" description="6,7-dimethyl-8-ribityllumazine synthase">
    <location>
        <begin position="1"/>
        <end position="158"/>
    </location>
</feature>
<feature type="active site" description="Proton donor" evidence="1">
    <location>
        <position position="90"/>
    </location>
</feature>
<feature type="binding site" evidence="1">
    <location>
        <position position="24"/>
    </location>
    <ligand>
        <name>5-amino-6-(D-ribitylamino)uracil</name>
        <dbReference type="ChEBI" id="CHEBI:15934"/>
    </ligand>
</feature>
<feature type="binding site" evidence="1">
    <location>
        <begin position="58"/>
        <end position="60"/>
    </location>
    <ligand>
        <name>5-amino-6-(D-ribitylamino)uracil</name>
        <dbReference type="ChEBI" id="CHEBI:15934"/>
    </ligand>
</feature>
<feature type="binding site" evidence="1">
    <location>
        <begin position="82"/>
        <end position="84"/>
    </location>
    <ligand>
        <name>5-amino-6-(D-ribitylamino)uracil</name>
        <dbReference type="ChEBI" id="CHEBI:15934"/>
    </ligand>
</feature>
<feature type="binding site" evidence="1">
    <location>
        <begin position="87"/>
        <end position="88"/>
    </location>
    <ligand>
        <name>(2S)-2-hydroxy-3-oxobutyl phosphate</name>
        <dbReference type="ChEBI" id="CHEBI:58830"/>
    </ligand>
</feature>
<feature type="binding site" evidence="1">
    <location>
        <position position="115"/>
    </location>
    <ligand>
        <name>5-amino-6-(D-ribitylamino)uracil</name>
        <dbReference type="ChEBI" id="CHEBI:15934"/>
    </ligand>
</feature>
<feature type="binding site" evidence="1">
    <location>
        <position position="129"/>
    </location>
    <ligand>
        <name>(2S)-2-hydroxy-3-oxobutyl phosphate</name>
        <dbReference type="ChEBI" id="CHEBI:58830"/>
    </ligand>
</feature>
<gene>
    <name evidence="1" type="primary">ribH</name>
    <name type="ordered locus">PputGB1_0563</name>
</gene>
<keyword id="KW-0686">Riboflavin biosynthesis</keyword>
<keyword id="KW-0808">Transferase</keyword>
<comment type="function">
    <text evidence="1">Catalyzes the formation of 6,7-dimethyl-8-ribityllumazine by condensation of 5-amino-6-(D-ribitylamino)uracil with 3,4-dihydroxy-2-butanone 4-phosphate. This is the penultimate step in the biosynthesis of riboflavin.</text>
</comment>
<comment type="catalytic activity">
    <reaction evidence="1">
        <text>(2S)-2-hydroxy-3-oxobutyl phosphate + 5-amino-6-(D-ribitylamino)uracil = 6,7-dimethyl-8-(1-D-ribityl)lumazine + phosphate + 2 H2O + H(+)</text>
        <dbReference type="Rhea" id="RHEA:26152"/>
        <dbReference type="ChEBI" id="CHEBI:15377"/>
        <dbReference type="ChEBI" id="CHEBI:15378"/>
        <dbReference type="ChEBI" id="CHEBI:15934"/>
        <dbReference type="ChEBI" id="CHEBI:43474"/>
        <dbReference type="ChEBI" id="CHEBI:58201"/>
        <dbReference type="ChEBI" id="CHEBI:58830"/>
        <dbReference type="EC" id="2.5.1.78"/>
    </reaction>
</comment>
<comment type="pathway">
    <text evidence="1">Cofactor biosynthesis; riboflavin biosynthesis; riboflavin from 2-hydroxy-3-oxobutyl phosphate and 5-amino-6-(D-ribitylamino)uracil: step 1/2.</text>
</comment>
<comment type="subunit">
    <text evidence="1">Forms an icosahedral capsid composed of 60 subunits, arranged as a dodecamer of pentamers.</text>
</comment>
<comment type="similarity">
    <text evidence="1">Belongs to the DMRL synthase family.</text>
</comment>
<name>RISB_PSEPG</name>
<proteinExistence type="inferred from homology"/>